<keyword id="KW-0106">Calcium</keyword>
<keyword id="KW-0186">Copper</keyword>
<keyword id="KW-0249">Electron transport</keyword>
<keyword id="KW-0349">Heme</keyword>
<keyword id="KW-0408">Iron</keyword>
<keyword id="KW-0460">Magnesium</keyword>
<keyword id="KW-0472">Membrane</keyword>
<keyword id="KW-0479">Metal-binding</keyword>
<keyword id="KW-0496">Mitochondrion</keyword>
<keyword id="KW-0999">Mitochondrion inner membrane</keyword>
<keyword id="KW-0679">Respiratory chain</keyword>
<keyword id="KW-0915">Sodium</keyword>
<keyword id="KW-1278">Translocase</keyword>
<keyword id="KW-0812">Transmembrane</keyword>
<keyword id="KW-1133">Transmembrane helix</keyword>
<keyword id="KW-0813">Transport</keyword>
<organism>
    <name type="scientific">Hippopotamus amphibius</name>
    <name type="common">Hippopotamus</name>
    <dbReference type="NCBI Taxonomy" id="9833"/>
    <lineage>
        <taxon>Eukaryota</taxon>
        <taxon>Metazoa</taxon>
        <taxon>Chordata</taxon>
        <taxon>Craniata</taxon>
        <taxon>Vertebrata</taxon>
        <taxon>Euteleostomi</taxon>
        <taxon>Mammalia</taxon>
        <taxon>Eutheria</taxon>
        <taxon>Laurasiatheria</taxon>
        <taxon>Artiodactyla</taxon>
        <taxon>Whippomorpha</taxon>
        <taxon>Ancodonta</taxon>
        <taxon>Hippopotamidae</taxon>
        <taxon>Hippopotamus</taxon>
    </lineage>
</organism>
<protein>
    <recommendedName>
        <fullName>Cytochrome c oxidase subunit 1</fullName>
        <ecNumber>7.1.1.9</ecNumber>
    </recommendedName>
    <alternativeName>
        <fullName>Cytochrome c oxidase polypeptide I</fullName>
    </alternativeName>
</protein>
<sequence>MFMNRWLFSTNHKDIGTLYLLFGAWAGMAGTGLSLLIRAELGQPGTLLGDDQIYNVVVTAHAFVMIFFMVMPIMIGGFGNWLVPLMIGAPDMAFPRMNNMSFWLLPPSFLLLLASSMVEAGAGTGWTVYPPLAGNLAHAGASVDLTIFSLHLAGVSSILGAINFITTIINMKPPAMSQYQTPLFVWSVLITAVLLLLSLPVLAAGITMLLTDRNLNTTFFDPAGGGDPVLYQHLFWFFGHPEVYILILPGFGMISHIVTYYSGKKEPFGYMGMVWAMMSIGFLGFIVWAHHMFTVGMDVDTRAYFTSATMIIAIPTGVKVFSWLATLHGGNIKWSPAMMWALGFIFLFTVGGLTGIVLANSSLDIVLHDTYYVVAHFHYVLSMGAVFAIMGGFVHWFPLFSGYTLNDTWAKIHFVIMFVGVNLTFFPQHFLGLSGMPRRYSDYPDAYTTWNTISSMGSFISLTAVVLMVFIIWEAFVSKREVLAVDLTTTNLEWLNGCPPPYHTFEEPAYVNLTS</sequence>
<comment type="function">
    <text evidence="3">Component of the cytochrome c oxidase, the last enzyme in the mitochondrial electron transport chain which drives oxidative phosphorylation. The respiratory chain contains 3 multisubunit complexes succinate dehydrogenase (complex II, CII), ubiquinol-cytochrome c oxidoreductase (cytochrome b-c1 complex, complex III, CIII) and cytochrome c oxidase (complex IV, CIV), that cooperate to transfer electrons derived from NADH and succinate to molecular oxygen, creating an electrochemical gradient over the inner membrane that drives transmembrane transport and the ATP synthase. Cytochrome c oxidase is the component of the respiratory chain that catalyzes the reduction of oxygen to water. Electrons originating from reduced cytochrome c in the intermembrane space (IMS) are transferred via the dinuclear copper A center (CU(A)) of subunit 2 and heme A of subunit 1 to the active site in subunit 1, a binuclear center (BNC) formed by heme A3 and copper B (CU(B)). The BNC reduces molecular oxygen to 2 water molecules using 4 electrons from cytochrome c in the IMS and 4 protons from the mitochondrial matrix.</text>
</comment>
<comment type="catalytic activity">
    <reaction evidence="3">
        <text>4 Fe(II)-[cytochrome c] + O2 + 8 H(+)(in) = 4 Fe(III)-[cytochrome c] + 2 H2O + 4 H(+)(out)</text>
        <dbReference type="Rhea" id="RHEA:11436"/>
        <dbReference type="Rhea" id="RHEA-COMP:10350"/>
        <dbReference type="Rhea" id="RHEA-COMP:14399"/>
        <dbReference type="ChEBI" id="CHEBI:15377"/>
        <dbReference type="ChEBI" id="CHEBI:15378"/>
        <dbReference type="ChEBI" id="CHEBI:15379"/>
        <dbReference type="ChEBI" id="CHEBI:29033"/>
        <dbReference type="ChEBI" id="CHEBI:29034"/>
        <dbReference type="EC" id="7.1.1.9"/>
    </reaction>
    <physiologicalReaction direction="left-to-right" evidence="3">
        <dbReference type="Rhea" id="RHEA:11437"/>
    </physiologicalReaction>
</comment>
<comment type="cofactor">
    <cofactor evidence="2">
        <name>heme</name>
        <dbReference type="ChEBI" id="CHEBI:30413"/>
    </cofactor>
    <text evidence="2">Binds 2 heme A groups non-covalently per subunit.</text>
</comment>
<comment type="cofactor">
    <cofactor evidence="2">
        <name>Cu cation</name>
        <dbReference type="ChEBI" id="CHEBI:23378"/>
    </cofactor>
    <text evidence="2">Binds a copper B center.</text>
</comment>
<comment type="pathway">
    <text evidence="3">Energy metabolism; oxidative phosphorylation.</text>
</comment>
<comment type="subunit">
    <text evidence="1 2">Component of the cytochrome c oxidase (complex IV, CIV), a multisubunit enzyme composed of 14 subunits. The complex is composed of a catalytic core of 3 subunits MT-CO1, MT-CO2 and MT-CO3, encoded in the mitochondrial DNA, and 11 supernumerary subunits COX4I, COX5A, COX5B, COX6A, COX6B, COX6C, COX7A, COX7B, COX7C, COX8 and NDUFA4, which are encoded in the nuclear genome. The complex exists as a monomer or a dimer and forms supercomplexes (SCs) in the inner mitochondrial membrane with NADH-ubiquinone oxidoreductase (complex I, CI) and ubiquinol-cytochrome c oxidoreductase (cytochrome b-c1 complex, complex III, CIII), resulting in different assemblies (supercomplex SCI(1)III(2)IV(1) and megacomplex MCI(2)III(2)IV(2)) (By similarity). As a newly synthesized protein, rapidly incorporates into a multi-subunit assembly intermediate in the inner membrane, called MITRAC (mitochondrial translation regulation assembly intermediate of cytochrome c oxidase) complex, whose core components are COA3/MITRAC12 and COX14. Within the MITRAC complex, interacts with COA3 and with SMIM20/MITRAC7; the interaction with SMIM20 stabilizes the newly synthesized MT-CO1 and prevents its premature turnover. Interacts with TMEM177 in a COX20-dependent manner (By similarity).</text>
</comment>
<comment type="subcellular location">
    <subcellularLocation>
        <location evidence="2">Mitochondrion inner membrane</location>
        <topology evidence="2">Multi-pass membrane protein</topology>
    </subcellularLocation>
</comment>
<comment type="similarity">
    <text evidence="4">Belongs to the heme-copper respiratory oxidase family.</text>
</comment>
<name>COX1_HIPAM</name>
<reference key="1">
    <citation type="journal article" date="1998" name="Proc. R. Soc. B">
        <title>Analyses of mitochondrial genomes strongly support a hippopotamus-whale clade.</title>
        <authorList>
            <person name="Ursing B.M."/>
            <person name="Arnason U."/>
        </authorList>
    </citation>
    <scope>NUCLEOTIDE SEQUENCE [GENOMIC DNA]</scope>
</reference>
<dbReference type="EC" id="7.1.1.9"/>
<dbReference type="EMBL" id="AJ010957">
    <property type="protein sequence ID" value="CAA09430.1"/>
    <property type="molecule type" value="Genomic_DNA"/>
</dbReference>
<dbReference type="RefSeq" id="NP_008792.1">
    <property type="nucleotide sequence ID" value="NC_000889.1"/>
</dbReference>
<dbReference type="SMR" id="Q9ZZY9"/>
<dbReference type="GeneID" id="808675"/>
<dbReference type="CTD" id="4512"/>
<dbReference type="UniPathway" id="UPA00705"/>
<dbReference type="GO" id="GO:0005743">
    <property type="term" value="C:mitochondrial inner membrane"/>
    <property type="evidence" value="ECO:0007669"/>
    <property type="project" value="UniProtKB-SubCell"/>
</dbReference>
<dbReference type="GO" id="GO:0045277">
    <property type="term" value="C:respiratory chain complex IV"/>
    <property type="evidence" value="ECO:0000250"/>
    <property type="project" value="UniProtKB"/>
</dbReference>
<dbReference type="GO" id="GO:0004129">
    <property type="term" value="F:cytochrome-c oxidase activity"/>
    <property type="evidence" value="ECO:0007669"/>
    <property type="project" value="UniProtKB-EC"/>
</dbReference>
<dbReference type="GO" id="GO:0020037">
    <property type="term" value="F:heme binding"/>
    <property type="evidence" value="ECO:0007669"/>
    <property type="project" value="InterPro"/>
</dbReference>
<dbReference type="GO" id="GO:0046872">
    <property type="term" value="F:metal ion binding"/>
    <property type="evidence" value="ECO:0007669"/>
    <property type="project" value="UniProtKB-KW"/>
</dbReference>
<dbReference type="GO" id="GO:0015990">
    <property type="term" value="P:electron transport coupled proton transport"/>
    <property type="evidence" value="ECO:0007669"/>
    <property type="project" value="TreeGrafter"/>
</dbReference>
<dbReference type="GO" id="GO:0006123">
    <property type="term" value="P:mitochondrial electron transport, cytochrome c to oxygen"/>
    <property type="evidence" value="ECO:0007669"/>
    <property type="project" value="TreeGrafter"/>
</dbReference>
<dbReference type="CDD" id="cd01663">
    <property type="entry name" value="Cyt_c_Oxidase_I"/>
    <property type="match status" value="1"/>
</dbReference>
<dbReference type="FunFam" id="1.20.210.10:FF:000001">
    <property type="entry name" value="Cytochrome c oxidase subunit 1"/>
    <property type="match status" value="1"/>
</dbReference>
<dbReference type="Gene3D" id="1.20.210.10">
    <property type="entry name" value="Cytochrome c oxidase-like, subunit I domain"/>
    <property type="match status" value="1"/>
</dbReference>
<dbReference type="InterPro" id="IPR023616">
    <property type="entry name" value="Cyt_c_oxase-like_su1_dom"/>
</dbReference>
<dbReference type="InterPro" id="IPR036927">
    <property type="entry name" value="Cyt_c_oxase-like_su1_sf"/>
</dbReference>
<dbReference type="InterPro" id="IPR000883">
    <property type="entry name" value="Cyt_C_Oxase_1"/>
</dbReference>
<dbReference type="InterPro" id="IPR023615">
    <property type="entry name" value="Cyt_c_Oxase_su1_BS"/>
</dbReference>
<dbReference type="InterPro" id="IPR033944">
    <property type="entry name" value="Cyt_c_oxase_su1_dom"/>
</dbReference>
<dbReference type="PANTHER" id="PTHR10422">
    <property type="entry name" value="CYTOCHROME C OXIDASE SUBUNIT 1"/>
    <property type="match status" value="1"/>
</dbReference>
<dbReference type="PANTHER" id="PTHR10422:SF18">
    <property type="entry name" value="CYTOCHROME C OXIDASE SUBUNIT 1"/>
    <property type="match status" value="1"/>
</dbReference>
<dbReference type="Pfam" id="PF00115">
    <property type="entry name" value="COX1"/>
    <property type="match status" value="1"/>
</dbReference>
<dbReference type="PRINTS" id="PR01165">
    <property type="entry name" value="CYCOXIDASEI"/>
</dbReference>
<dbReference type="SUPFAM" id="SSF81442">
    <property type="entry name" value="Cytochrome c oxidase subunit I-like"/>
    <property type="match status" value="1"/>
</dbReference>
<dbReference type="PROSITE" id="PS50855">
    <property type="entry name" value="COX1"/>
    <property type="match status" value="1"/>
</dbReference>
<dbReference type="PROSITE" id="PS00077">
    <property type="entry name" value="COX1_CUB"/>
    <property type="match status" value="1"/>
</dbReference>
<feature type="chain" id="PRO_0000183343" description="Cytochrome c oxidase subunit 1">
    <location>
        <begin position="1"/>
        <end position="515"/>
    </location>
</feature>
<feature type="topological domain" description="Mitochondrial matrix" evidence="2">
    <location>
        <begin position="1"/>
        <end position="11"/>
    </location>
</feature>
<feature type="transmembrane region" description="Helical; Name=I" evidence="2">
    <location>
        <begin position="12"/>
        <end position="40"/>
    </location>
</feature>
<feature type="topological domain" description="Mitochondrial intermembrane" evidence="2">
    <location>
        <begin position="41"/>
        <end position="50"/>
    </location>
</feature>
<feature type="transmembrane region" description="Helical; Name=II" evidence="2">
    <location>
        <begin position="51"/>
        <end position="86"/>
    </location>
</feature>
<feature type="topological domain" description="Mitochondrial matrix" evidence="2">
    <location>
        <begin position="87"/>
        <end position="94"/>
    </location>
</feature>
<feature type="transmembrane region" description="Helical; Name=III" evidence="2">
    <location>
        <begin position="95"/>
        <end position="117"/>
    </location>
</feature>
<feature type="topological domain" description="Mitochondrial intermembrane" evidence="2">
    <location>
        <begin position="118"/>
        <end position="140"/>
    </location>
</feature>
<feature type="transmembrane region" description="Helical; Name=IV" evidence="2">
    <location>
        <begin position="141"/>
        <end position="170"/>
    </location>
</feature>
<feature type="topological domain" description="Mitochondrial matrix" evidence="2">
    <location>
        <begin position="171"/>
        <end position="182"/>
    </location>
</feature>
<feature type="transmembrane region" description="Helical; Name=V" evidence="2">
    <location>
        <begin position="183"/>
        <end position="212"/>
    </location>
</feature>
<feature type="topological domain" description="Mitochondrial intermembrane" evidence="2">
    <location>
        <begin position="213"/>
        <end position="227"/>
    </location>
</feature>
<feature type="transmembrane region" description="Helical; Name=VI" evidence="2">
    <location>
        <begin position="228"/>
        <end position="261"/>
    </location>
</feature>
<feature type="topological domain" description="Mitochondrial matrix" evidence="2">
    <location>
        <begin position="262"/>
        <end position="269"/>
    </location>
</feature>
<feature type="transmembrane region" description="Helical; Name=VII" evidence="2">
    <location>
        <begin position="270"/>
        <end position="286"/>
    </location>
</feature>
<feature type="topological domain" description="Mitochondrial intermembrane" evidence="2">
    <location>
        <begin position="287"/>
        <end position="298"/>
    </location>
</feature>
<feature type="transmembrane region" description="Helical; Name=VIII" evidence="2">
    <location>
        <begin position="299"/>
        <end position="327"/>
    </location>
</feature>
<feature type="topological domain" description="Mitochondrial matrix" evidence="2">
    <location>
        <begin position="328"/>
        <end position="335"/>
    </location>
</feature>
<feature type="transmembrane region" description="Helical; Name=IX" evidence="2">
    <location>
        <begin position="336"/>
        <end position="357"/>
    </location>
</feature>
<feature type="topological domain" description="Mitochondrial intermembrane" evidence="2">
    <location>
        <begin position="358"/>
        <end position="370"/>
    </location>
</feature>
<feature type="transmembrane region" description="Helical; Name=X" evidence="2">
    <location>
        <begin position="371"/>
        <end position="400"/>
    </location>
</feature>
<feature type="topological domain" description="Mitochondrial matrix" evidence="2">
    <location>
        <begin position="401"/>
        <end position="406"/>
    </location>
</feature>
<feature type="transmembrane region" description="Helical; Name=XI" evidence="2">
    <location>
        <begin position="407"/>
        <end position="433"/>
    </location>
</feature>
<feature type="topological domain" description="Mitochondrial intermembrane" evidence="2">
    <location>
        <begin position="434"/>
        <end position="446"/>
    </location>
</feature>
<feature type="transmembrane region" description="Helical; Name=XII" evidence="2">
    <location>
        <begin position="447"/>
        <end position="478"/>
    </location>
</feature>
<feature type="topological domain" description="Mitochondrial matrix" evidence="2">
    <location>
        <begin position="479"/>
        <end position="515"/>
    </location>
</feature>
<feature type="binding site" evidence="2">
    <location>
        <position position="40"/>
    </location>
    <ligand>
        <name>Na(+)</name>
        <dbReference type="ChEBI" id="CHEBI:29101"/>
    </ligand>
</feature>
<feature type="binding site" evidence="2">
    <location>
        <position position="45"/>
    </location>
    <ligand>
        <name>Na(+)</name>
        <dbReference type="ChEBI" id="CHEBI:29101"/>
    </ligand>
</feature>
<feature type="binding site" description="axial binding residue" evidence="2">
    <location>
        <position position="61"/>
    </location>
    <ligand>
        <name>Fe(II)-heme a</name>
        <dbReference type="ChEBI" id="CHEBI:61715"/>
        <note>low-spin</note>
    </ligand>
    <ligandPart>
        <name>Fe</name>
        <dbReference type="ChEBI" id="CHEBI:18248"/>
    </ligandPart>
</feature>
<feature type="binding site" evidence="2">
    <location>
        <position position="240"/>
    </location>
    <ligand>
        <name>Cu cation</name>
        <dbReference type="ChEBI" id="CHEBI:23378"/>
        <label>B</label>
    </ligand>
</feature>
<feature type="binding site" evidence="2">
    <location>
        <position position="244"/>
    </location>
    <ligand>
        <name>O2</name>
        <dbReference type="ChEBI" id="CHEBI:15379"/>
    </ligand>
</feature>
<feature type="binding site" evidence="2">
    <location>
        <position position="290"/>
    </location>
    <ligand>
        <name>Cu cation</name>
        <dbReference type="ChEBI" id="CHEBI:23378"/>
        <label>B</label>
    </ligand>
</feature>
<feature type="binding site" evidence="2">
    <location>
        <position position="291"/>
    </location>
    <ligand>
        <name>Cu cation</name>
        <dbReference type="ChEBI" id="CHEBI:23378"/>
        <label>B</label>
    </ligand>
</feature>
<feature type="binding site" evidence="2">
    <location>
        <position position="368"/>
    </location>
    <ligand>
        <name>Mg(2+)</name>
        <dbReference type="ChEBI" id="CHEBI:18420"/>
        <note>ligand shared with MT-CO2</note>
    </ligand>
</feature>
<feature type="binding site" evidence="2">
    <location>
        <position position="369"/>
    </location>
    <ligand>
        <name>Mg(2+)</name>
        <dbReference type="ChEBI" id="CHEBI:18420"/>
        <note>ligand shared with MT-CO2</note>
    </ligand>
</feature>
<feature type="binding site" description="axial binding residue" evidence="2">
    <location>
        <position position="376"/>
    </location>
    <ligand>
        <name>heme a3</name>
        <dbReference type="ChEBI" id="CHEBI:83282"/>
        <note>high-spin</note>
    </ligand>
    <ligandPart>
        <name>Fe</name>
        <dbReference type="ChEBI" id="CHEBI:18248"/>
    </ligandPart>
</feature>
<feature type="binding site" description="axial binding residue" evidence="2">
    <location>
        <position position="378"/>
    </location>
    <ligand>
        <name>Fe(II)-heme a</name>
        <dbReference type="ChEBI" id="CHEBI:61715"/>
        <note>low-spin</note>
    </ligand>
    <ligandPart>
        <name>Fe</name>
        <dbReference type="ChEBI" id="CHEBI:18248"/>
    </ligandPart>
</feature>
<feature type="binding site" evidence="2">
    <location>
        <position position="441"/>
    </location>
    <ligand>
        <name>Na(+)</name>
        <dbReference type="ChEBI" id="CHEBI:29101"/>
    </ligand>
</feature>
<feature type="cross-link" description="1'-histidyl-3'-tyrosine (His-Tyr)" evidence="2">
    <location>
        <begin position="240"/>
        <end position="244"/>
    </location>
</feature>
<geneLocation type="mitochondrion"/>
<accession>Q9ZZY9</accession>
<evidence type="ECO:0000250" key="1">
    <source>
        <dbReference type="UniProtKB" id="P00395"/>
    </source>
</evidence>
<evidence type="ECO:0000250" key="2">
    <source>
        <dbReference type="UniProtKB" id="P00396"/>
    </source>
</evidence>
<evidence type="ECO:0000250" key="3">
    <source>
        <dbReference type="UniProtKB" id="P00401"/>
    </source>
</evidence>
<evidence type="ECO:0000305" key="4"/>
<proteinExistence type="inferred from homology"/>
<gene>
    <name type="primary">MT-CO1</name>
    <name type="synonym">COI</name>
    <name type="synonym">COXI</name>
    <name type="synonym">MTCO1</name>
</gene>